<comment type="function">
    <text evidence="1">Transporter involved in the efflux of sodium, potassium, lithium and rubidium.</text>
</comment>
<comment type="subcellular location">
    <subcellularLocation>
        <location evidence="3">Cell membrane</location>
        <topology evidence="3">Multi-pass membrane protein</topology>
    </subcellularLocation>
</comment>
<comment type="similarity">
    <text evidence="3">Belongs to the monovalent cation:proton antiporter 1 (CPA1) transporter (TC 2.A.36) family. Nhak (TC 2.A.36.3.2) subfamily.</text>
</comment>
<reference key="1">
    <citation type="journal article" date="2007" name="PLoS ONE">
        <title>Paradoxical DNA repair and peroxide resistance gene conservation in Bacillus pumilus SAFR-032.</title>
        <authorList>
            <person name="Gioia J."/>
            <person name="Yerrapragada S."/>
            <person name="Qin X."/>
            <person name="Jiang H."/>
            <person name="Igboeli O.C."/>
            <person name="Muzny D."/>
            <person name="Dugan-Rocha S."/>
            <person name="Ding Y."/>
            <person name="Hawes A."/>
            <person name="Liu W."/>
            <person name="Perez L."/>
            <person name="Kovar C."/>
            <person name="Dinh H."/>
            <person name="Lee S."/>
            <person name="Nazareth L."/>
            <person name="Blyth P."/>
            <person name="Holder M."/>
            <person name="Buhay C."/>
            <person name="Tirumalai M.R."/>
            <person name="Liu Y."/>
            <person name="Dasgupta I."/>
            <person name="Bokhetache L."/>
            <person name="Fujita M."/>
            <person name="Karouia F."/>
            <person name="Eswara Moorthy P."/>
            <person name="Siefert J."/>
            <person name="Uzman A."/>
            <person name="Buzumbo P."/>
            <person name="Verma A."/>
            <person name="Zwiya H."/>
            <person name="McWilliams B.D."/>
            <person name="Olowu A."/>
            <person name="Clinkenbeard K.D."/>
            <person name="Newcombe D."/>
            <person name="Golebiewski L."/>
            <person name="Petrosino J.F."/>
            <person name="Nicholson W.L."/>
            <person name="Fox G.E."/>
            <person name="Venkateswaran K."/>
            <person name="Highlander S.K."/>
            <person name="Weinstock G.M."/>
        </authorList>
    </citation>
    <scope>NUCLEOTIDE SEQUENCE [LARGE SCALE GENOMIC DNA]</scope>
    <source>
        <strain>SAFR-032</strain>
    </source>
</reference>
<sequence>MEIFLAVLVLLALIASSNIINRFVPFIPVPLIQVGLGILVAAFPSGLHISLNPELFFVLFIAPLLFNDGKRTPRDELWKLRAPILLLALGLVFATVIVAGYTIHWMIPSIPLPAAFALAAILSPTDVVAVSALSSRVNMPKGIMRLLEGEGLMNDASGLVAFKFAIAATVTGAFSIAEASFSFVLIAAGGLLTGFILSFFIIRFRYFLRRLGMDDVTMHIILQILTPFVIYLAAEEIGVSGILAVVAGGVTHAIEQDRMEANLAKLQIASSNTWNIILFILNGLVFVILGLQIPDVSTVIFQDEAFNNMQVITYILIITLCLMILRFLWVWLFWAGKWSATKKQNVKKPKLRASMLMTFSGVRGAVTLAGAFSIPFTLADGSPFPERHLIIFLAAGVILCTLILASVLLPLLSEKKDKQIAVDLDTKIQHAKRKLLRSAIKTLREGMNEDNREVSLALINDYRMKLRNIQREPYQFGMRRQEKKIRLHGIKAEQMKLQQLIEEEKIDQQEAYELQERFHELEMLYSNSFKIRFSKVKFLRLLQWLQLWRPNQLVSSGILENEDSYKQIRKKTAEAAVDSIKQHMNDENKQTCHQVIGFYNQVIYRCEHGPSFFQQKDRSFDRKKKELNFQAVQTIRNEIQTLYENGEINRDIAHHLREYINDMEAVLLTNT</sequence>
<accession>A8FHE3</accession>
<dbReference type="EMBL" id="CP000813">
    <property type="protein sequence ID" value="ABV63660.1"/>
    <property type="molecule type" value="Genomic_DNA"/>
</dbReference>
<dbReference type="RefSeq" id="WP_012011255.1">
    <property type="nucleotide sequence ID" value="NZ_VEIC01000015.1"/>
</dbReference>
<dbReference type="SMR" id="A8FHE3"/>
<dbReference type="STRING" id="315750.BPUM_3006"/>
<dbReference type="GeneID" id="5622295"/>
<dbReference type="KEGG" id="bpu:BPUM_3006"/>
<dbReference type="eggNOG" id="COG0025">
    <property type="taxonomic scope" value="Bacteria"/>
</dbReference>
<dbReference type="HOGENOM" id="CLU_005912_6_2_9"/>
<dbReference type="OrthoDB" id="9809206at2"/>
<dbReference type="Proteomes" id="UP000001355">
    <property type="component" value="Chromosome"/>
</dbReference>
<dbReference type="GO" id="GO:0005886">
    <property type="term" value="C:plasma membrane"/>
    <property type="evidence" value="ECO:0007669"/>
    <property type="project" value="UniProtKB-SubCell"/>
</dbReference>
<dbReference type="GO" id="GO:0015386">
    <property type="term" value="F:potassium:proton antiporter activity"/>
    <property type="evidence" value="ECO:0007669"/>
    <property type="project" value="TreeGrafter"/>
</dbReference>
<dbReference type="GO" id="GO:0015385">
    <property type="term" value="F:sodium:proton antiporter activity"/>
    <property type="evidence" value="ECO:0007669"/>
    <property type="project" value="InterPro"/>
</dbReference>
<dbReference type="GO" id="GO:0051453">
    <property type="term" value="P:regulation of intracellular pH"/>
    <property type="evidence" value="ECO:0007669"/>
    <property type="project" value="TreeGrafter"/>
</dbReference>
<dbReference type="GO" id="GO:0098719">
    <property type="term" value="P:sodium ion import across plasma membrane"/>
    <property type="evidence" value="ECO:0007669"/>
    <property type="project" value="TreeGrafter"/>
</dbReference>
<dbReference type="Gene3D" id="6.10.140.1330">
    <property type="match status" value="1"/>
</dbReference>
<dbReference type="InterPro" id="IPR018422">
    <property type="entry name" value="Cation/H_exchanger_CPA1"/>
</dbReference>
<dbReference type="InterPro" id="IPR004705">
    <property type="entry name" value="Cation/H_exchanger_CPA1_bac"/>
</dbReference>
<dbReference type="InterPro" id="IPR006153">
    <property type="entry name" value="Cation/H_exchanger_TM"/>
</dbReference>
<dbReference type="NCBIfam" id="TIGR00831">
    <property type="entry name" value="a_cpa1"/>
    <property type="match status" value="1"/>
</dbReference>
<dbReference type="PANTHER" id="PTHR10110">
    <property type="entry name" value="SODIUM/HYDROGEN EXCHANGER"/>
    <property type="match status" value="1"/>
</dbReference>
<dbReference type="PANTHER" id="PTHR10110:SF86">
    <property type="entry name" value="SODIUM_HYDROGEN EXCHANGER 7"/>
    <property type="match status" value="1"/>
</dbReference>
<dbReference type="Pfam" id="PF00999">
    <property type="entry name" value="Na_H_Exchanger"/>
    <property type="match status" value="1"/>
</dbReference>
<keyword id="KW-1003">Cell membrane</keyword>
<keyword id="KW-0406">Ion transport</keyword>
<keyword id="KW-0452">Lithium</keyword>
<keyword id="KW-0472">Membrane</keyword>
<keyword id="KW-0630">Potassium</keyword>
<keyword id="KW-0633">Potassium transport</keyword>
<keyword id="KW-0915">Sodium</keyword>
<keyword id="KW-0739">Sodium transport</keyword>
<keyword id="KW-0812">Transmembrane</keyword>
<keyword id="KW-1133">Transmembrane helix</keyword>
<keyword id="KW-0813">Transport</keyword>
<proteinExistence type="inferred from homology"/>
<name>NHAK_BACP2</name>
<gene>
    <name type="primary">nhaK</name>
    <name type="ordered locus">BPUM_3006</name>
</gene>
<protein>
    <recommendedName>
        <fullName>Sodium, potassium, lithium and rubidium/H(+) antiporter</fullName>
    </recommendedName>
</protein>
<evidence type="ECO:0000250" key="1"/>
<evidence type="ECO:0000255" key="2"/>
<evidence type="ECO:0000305" key="3"/>
<organism>
    <name type="scientific">Bacillus pumilus (strain SAFR-032)</name>
    <dbReference type="NCBI Taxonomy" id="315750"/>
    <lineage>
        <taxon>Bacteria</taxon>
        <taxon>Bacillati</taxon>
        <taxon>Bacillota</taxon>
        <taxon>Bacilli</taxon>
        <taxon>Bacillales</taxon>
        <taxon>Bacillaceae</taxon>
        <taxon>Bacillus</taxon>
    </lineage>
</organism>
<feature type="chain" id="PRO_0000337073" description="Sodium, potassium, lithium and rubidium/H(+) antiporter">
    <location>
        <begin position="1"/>
        <end position="671"/>
    </location>
</feature>
<feature type="transmembrane region" description="Helical" evidence="2">
    <location>
        <begin position="7"/>
        <end position="29"/>
    </location>
</feature>
<feature type="transmembrane region" description="Helical" evidence="2">
    <location>
        <begin position="46"/>
        <end position="66"/>
    </location>
</feature>
<feature type="transmembrane region" description="Helical" evidence="2">
    <location>
        <begin position="83"/>
        <end position="103"/>
    </location>
</feature>
<feature type="transmembrane region" description="Helical" evidence="2">
    <location>
        <begin position="110"/>
        <end position="130"/>
    </location>
</feature>
<feature type="transmembrane region" description="Helical" evidence="2">
    <location>
        <begin position="156"/>
        <end position="176"/>
    </location>
</feature>
<feature type="transmembrane region" description="Helical" evidence="2">
    <location>
        <begin position="182"/>
        <end position="202"/>
    </location>
</feature>
<feature type="transmembrane region" description="Helical" evidence="2">
    <location>
        <begin position="228"/>
        <end position="248"/>
    </location>
</feature>
<feature type="transmembrane region" description="Helical" evidence="2">
    <location>
        <begin position="276"/>
        <end position="296"/>
    </location>
</feature>
<feature type="transmembrane region" description="Helical" evidence="2">
    <location>
        <begin position="315"/>
        <end position="335"/>
    </location>
</feature>
<feature type="transmembrane region" description="Helical" evidence="2">
    <location>
        <begin position="364"/>
        <end position="384"/>
    </location>
</feature>
<feature type="transmembrane region" description="Helical" evidence="2">
    <location>
        <begin position="389"/>
        <end position="409"/>
    </location>
</feature>